<organism>
    <name type="scientific">Treponema pallidum subsp. pallidum (strain SS14)</name>
    <dbReference type="NCBI Taxonomy" id="455434"/>
    <lineage>
        <taxon>Bacteria</taxon>
        <taxon>Pseudomonadati</taxon>
        <taxon>Spirochaetota</taxon>
        <taxon>Spirochaetia</taxon>
        <taxon>Spirochaetales</taxon>
        <taxon>Treponemataceae</taxon>
        <taxon>Treponema</taxon>
    </lineage>
</organism>
<evidence type="ECO:0000255" key="1">
    <source>
        <dbReference type="HAMAP-Rule" id="MF_00385"/>
    </source>
</evidence>
<evidence type="ECO:0000305" key="2"/>
<accession>B2S4E2</accession>
<keyword id="KW-0687">Ribonucleoprotein</keyword>
<keyword id="KW-0689">Ribosomal protein</keyword>
<dbReference type="EMBL" id="CP000805">
    <property type="protein sequence ID" value="ACD71321.1"/>
    <property type="molecule type" value="Genomic_DNA"/>
</dbReference>
<dbReference type="SMR" id="B2S4E2"/>
<dbReference type="KEGG" id="tpp:TPASS_0905"/>
<dbReference type="PATRIC" id="fig|455434.6.peg.891"/>
<dbReference type="Proteomes" id="UP000001202">
    <property type="component" value="Chromosome"/>
</dbReference>
<dbReference type="GO" id="GO:0005737">
    <property type="term" value="C:cytoplasm"/>
    <property type="evidence" value="ECO:0007669"/>
    <property type="project" value="UniProtKB-ARBA"/>
</dbReference>
<dbReference type="GO" id="GO:0015935">
    <property type="term" value="C:small ribosomal subunit"/>
    <property type="evidence" value="ECO:0007669"/>
    <property type="project" value="TreeGrafter"/>
</dbReference>
<dbReference type="GO" id="GO:0003735">
    <property type="term" value="F:structural constituent of ribosome"/>
    <property type="evidence" value="ECO:0007669"/>
    <property type="project" value="InterPro"/>
</dbReference>
<dbReference type="GO" id="GO:0006412">
    <property type="term" value="P:translation"/>
    <property type="evidence" value="ECO:0007669"/>
    <property type="project" value="UniProtKB-UniRule"/>
</dbReference>
<dbReference type="Gene3D" id="3.30.1320.10">
    <property type="match status" value="1"/>
</dbReference>
<dbReference type="HAMAP" id="MF_00385">
    <property type="entry name" value="Ribosomal_bS16"/>
    <property type="match status" value="1"/>
</dbReference>
<dbReference type="InterPro" id="IPR000307">
    <property type="entry name" value="Ribosomal_bS16"/>
</dbReference>
<dbReference type="InterPro" id="IPR023803">
    <property type="entry name" value="Ribosomal_bS16_dom_sf"/>
</dbReference>
<dbReference type="NCBIfam" id="TIGR00002">
    <property type="entry name" value="S16"/>
    <property type="match status" value="1"/>
</dbReference>
<dbReference type="PANTHER" id="PTHR12919">
    <property type="entry name" value="30S RIBOSOMAL PROTEIN S16"/>
    <property type="match status" value="1"/>
</dbReference>
<dbReference type="PANTHER" id="PTHR12919:SF20">
    <property type="entry name" value="SMALL RIBOSOMAL SUBUNIT PROTEIN BS16M"/>
    <property type="match status" value="1"/>
</dbReference>
<dbReference type="Pfam" id="PF00886">
    <property type="entry name" value="Ribosomal_S16"/>
    <property type="match status" value="1"/>
</dbReference>
<dbReference type="SUPFAM" id="SSF54565">
    <property type="entry name" value="Ribosomal protein S16"/>
    <property type="match status" value="1"/>
</dbReference>
<comment type="similarity">
    <text evidence="1">Belongs to the bacterial ribosomal protein bS16 family.</text>
</comment>
<feature type="chain" id="PRO_1000122593" description="Small ribosomal subunit protein bS16">
    <location>
        <begin position="1"/>
        <end position="123"/>
    </location>
</feature>
<gene>
    <name evidence="1" type="primary">rpsP</name>
    <name type="ordered locus">TPASS_0905</name>
</gene>
<reference key="1">
    <citation type="journal article" date="2008" name="BMC Microbiol.">
        <title>Complete genome sequence of Treponema pallidum ssp. pallidum strain SS14 determined with oligonucleotide arrays.</title>
        <authorList>
            <person name="Matejkova P."/>
            <person name="Strouhal M."/>
            <person name="Smajs D."/>
            <person name="Norris S.J."/>
            <person name="Palzkill T."/>
            <person name="Petrosino J.F."/>
            <person name="Sodergren E."/>
            <person name="Norton J.E."/>
            <person name="Singh J."/>
            <person name="Richmond T.A."/>
            <person name="Molla M.N."/>
            <person name="Albert T.J."/>
            <person name="Weinstock G.M."/>
        </authorList>
    </citation>
    <scope>NUCLEOTIDE SEQUENCE [LARGE SCALE GENOMIC DNA]</scope>
    <source>
        <strain>SS14</strain>
    </source>
</reference>
<proteinExistence type="inferred from homology"/>
<name>RS16_TREPS</name>
<protein>
    <recommendedName>
        <fullName evidence="1">Small ribosomal subunit protein bS16</fullName>
    </recommendedName>
    <alternativeName>
        <fullName evidence="2">30S ribosomal protein S16</fullName>
    </alternativeName>
</protein>
<sequence>MSLRIRLKKLGSKKRPYYRIVVQDAREPRDGRAIEELGIYQPIAPKGTEVSFRLDRARFWLERGAQPSDTVRRLLQSRRGSVLNAVASDERRVASSQQAADLAHVESVSCAAPIPSSPGGQGV</sequence>